<proteinExistence type="inferred from homology"/>
<gene>
    <name evidence="1" type="primary">rplR</name>
    <name type="ordered locus">BCE_0126</name>
</gene>
<organism>
    <name type="scientific">Bacillus cereus (strain ATCC 10987 / NRS 248)</name>
    <dbReference type="NCBI Taxonomy" id="222523"/>
    <lineage>
        <taxon>Bacteria</taxon>
        <taxon>Bacillati</taxon>
        <taxon>Bacillota</taxon>
        <taxon>Bacilli</taxon>
        <taxon>Bacillales</taxon>
        <taxon>Bacillaceae</taxon>
        <taxon>Bacillus</taxon>
        <taxon>Bacillus cereus group</taxon>
    </lineage>
</organism>
<name>RL18_BACC1</name>
<reference key="1">
    <citation type="journal article" date="2004" name="Nucleic Acids Res.">
        <title>The genome sequence of Bacillus cereus ATCC 10987 reveals metabolic adaptations and a large plasmid related to Bacillus anthracis pXO1.</title>
        <authorList>
            <person name="Rasko D.A."/>
            <person name="Ravel J."/>
            <person name="Oekstad O.A."/>
            <person name="Helgason E."/>
            <person name="Cer R.Z."/>
            <person name="Jiang L."/>
            <person name="Shores K.A."/>
            <person name="Fouts D.E."/>
            <person name="Tourasse N.J."/>
            <person name="Angiuoli S.V."/>
            <person name="Kolonay J.F."/>
            <person name="Nelson W.C."/>
            <person name="Kolstoe A.-B."/>
            <person name="Fraser C.M."/>
            <person name="Read T.D."/>
        </authorList>
    </citation>
    <scope>NUCLEOTIDE SEQUENCE [LARGE SCALE GENOMIC DNA]</scope>
    <source>
        <strain>ATCC 10987 / NRS 248</strain>
    </source>
</reference>
<evidence type="ECO:0000255" key="1">
    <source>
        <dbReference type="HAMAP-Rule" id="MF_01337"/>
    </source>
</evidence>
<evidence type="ECO:0000305" key="2"/>
<dbReference type="EMBL" id="AE017194">
    <property type="protein sequence ID" value="AAS39062.1"/>
    <property type="molecule type" value="Genomic_DNA"/>
</dbReference>
<dbReference type="SMR" id="Q73F80"/>
<dbReference type="KEGG" id="bca:BCE_0126"/>
<dbReference type="HOGENOM" id="CLU_098841_0_1_9"/>
<dbReference type="Proteomes" id="UP000002527">
    <property type="component" value="Chromosome"/>
</dbReference>
<dbReference type="GO" id="GO:0022625">
    <property type="term" value="C:cytosolic large ribosomal subunit"/>
    <property type="evidence" value="ECO:0007669"/>
    <property type="project" value="TreeGrafter"/>
</dbReference>
<dbReference type="GO" id="GO:0008097">
    <property type="term" value="F:5S rRNA binding"/>
    <property type="evidence" value="ECO:0007669"/>
    <property type="project" value="TreeGrafter"/>
</dbReference>
<dbReference type="GO" id="GO:0003735">
    <property type="term" value="F:structural constituent of ribosome"/>
    <property type="evidence" value="ECO:0007669"/>
    <property type="project" value="InterPro"/>
</dbReference>
<dbReference type="GO" id="GO:0006412">
    <property type="term" value="P:translation"/>
    <property type="evidence" value="ECO:0007669"/>
    <property type="project" value="UniProtKB-UniRule"/>
</dbReference>
<dbReference type="CDD" id="cd00432">
    <property type="entry name" value="Ribosomal_L18_L5e"/>
    <property type="match status" value="1"/>
</dbReference>
<dbReference type="FunFam" id="3.30.420.100:FF:000001">
    <property type="entry name" value="50S ribosomal protein L18"/>
    <property type="match status" value="1"/>
</dbReference>
<dbReference type="Gene3D" id="3.30.420.100">
    <property type="match status" value="1"/>
</dbReference>
<dbReference type="HAMAP" id="MF_01337_B">
    <property type="entry name" value="Ribosomal_uL18_B"/>
    <property type="match status" value="1"/>
</dbReference>
<dbReference type="InterPro" id="IPR004389">
    <property type="entry name" value="Ribosomal_uL18_bac-type"/>
</dbReference>
<dbReference type="InterPro" id="IPR005484">
    <property type="entry name" value="Ribosomal_uL18_bac/euk"/>
</dbReference>
<dbReference type="NCBIfam" id="TIGR00060">
    <property type="entry name" value="L18_bact"/>
    <property type="match status" value="1"/>
</dbReference>
<dbReference type="PANTHER" id="PTHR12899">
    <property type="entry name" value="39S RIBOSOMAL PROTEIN L18, MITOCHONDRIAL"/>
    <property type="match status" value="1"/>
</dbReference>
<dbReference type="PANTHER" id="PTHR12899:SF3">
    <property type="entry name" value="LARGE RIBOSOMAL SUBUNIT PROTEIN UL18M"/>
    <property type="match status" value="1"/>
</dbReference>
<dbReference type="Pfam" id="PF00861">
    <property type="entry name" value="Ribosomal_L18p"/>
    <property type="match status" value="1"/>
</dbReference>
<dbReference type="SUPFAM" id="SSF53137">
    <property type="entry name" value="Translational machinery components"/>
    <property type="match status" value="1"/>
</dbReference>
<feature type="chain" id="PRO_0000131206" description="Large ribosomal subunit protein uL18">
    <location>
        <begin position="1"/>
        <end position="120"/>
    </location>
</feature>
<sequence>MITKADKNATRKKRHARVRAKLTGTAERPRLNVFRSNQHIYAQVIDDVNGVTLVSASTLDKDLALNGTSNIEAATKVGESVAKRAVEKGVKEVVFDRGGYLYHGRVKALAEAAREAGLQF</sequence>
<keyword id="KW-0687">Ribonucleoprotein</keyword>
<keyword id="KW-0689">Ribosomal protein</keyword>
<keyword id="KW-0694">RNA-binding</keyword>
<keyword id="KW-0699">rRNA-binding</keyword>
<accession>Q73F80</accession>
<protein>
    <recommendedName>
        <fullName evidence="1">Large ribosomal subunit protein uL18</fullName>
    </recommendedName>
    <alternativeName>
        <fullName evidence="2">50S ribosomal protein L18</fullName>
    </alternativeName>
</protein>
<comment type="function">
    <text evidence="1">This is one of the proteins that bind and probably mediate the attachment of the 5S RNA into the large ribosomal subunit, where it forms part of the central protuberance.</text>
</comment>
<comment type="subunit">
    <text evidence="1">Part of the 50S ribosomal subunit; part of the 5S rRNA/L5/L18/L25 subcomplex. Contacts the 5S and 23S rRNAs.</text>
</comment>
<comment type="similarity">
    <text evidence="1">Belongs to the universal ribosomal protein uL18 family.</text>
</comment>